<keyword id="KW-0963">Cytoplasm</keyword>
<keyword id="KW-0418">Kinase</keyword>
<keyword id="KW-0460">Magnesium</keyword>
<keyword id="KW-0479">Metal-binding</keyword>
<keyword id="KW-0598">Phosphotransferase system</keyword>
<keyword id="KW-0762">Sugar transport</keyword>
<keyword id="KW-0808">Transferase</keyword>
<keyword id="KW-0813">Transport</keyword>
<feature type="chain" id="PRO_0000147084" description="Phosphoenolpyruvate-protein phosphotransferase">
    <location>
        <begin position="1"/>
        <end position="572"/>
    </location>
</feature>
<feature type="active site" description="Tele-phosphohistidine intermediate" evidence="1">
    <location>
        <position position="191"/>
    </location>
</feature>
<feature type="active site" description="Proton donor" evidence="1">
    <location>
        <position position="504"/>
    </location>
</feature>
<feature type="binding site" evidence="2">
    <location>
        <position position="298"/>
    </location>
    <ligand>
        <name>phosphoenolpyruvate</name>
        <dbReference type="ChEBI" id="CHEBI:58702"/>
    </ligand>
</feature>
<feature type="binding site" evidence="1">
    <location>
        <position position="334"/>
    </location>
    <ligand>
        <name>phosphoenolpyruvate</name>
        <dbReference type="ChEBI" id="CHEBI:58702"/>
    </ligand>
</feature>
<feature type="binding site" evidence="1">
    <location>
        <position position="433"/>
    </location>
    <ligand>
        <name>Mg(2+)</name>
        <dbReference type="ChEBI" id="CHEBI:18420"/>
    </ligand>
</feature>
<feature type="binding site" evidence="1">
    <location>
        <begin position="456"/>
        <end position="457"/>
    </location>
    <ligand>
        <name>phosphoenolpyruvate</name>
        <dbReference type="ChEBI" id="CHEBI:58702"/>
    </ligand>
</feature>
<feature type="binding site" evidence="1">
    <location>
        <position position="457"/>
    </location>
    <ligand>
        <name>Mg(2+)</name>
        <dbReference type="ChEBI" id="CHEBI:18420"/>
    </ligand>
</feature>
<feature type="binding site" evidence="2">
    <location>
        <position position="467"/>
    </location>
    <ligand>
        <name>phosphoenolpyruvate</name>
        <dbReference type="ChEBI" id="CHEBI:58702"/>
    </ligand>
</feature>
<proteinExistence type="inferred from homology"/>
<name>PT1_STAAS</name>
<dbReference type="EC" id="2.7.3.9" evidence="1"/>
<dbReference type="EMBL" id="BX571857">
    <property type="protein sequence ID" value="CAG42793.1"/>
    <property type="molecule type" value="Genomic_DNA"/>
</dbReference>
<dbReference type="SMR" id="Q6GAD0"/>
<dbReference type="KEGG" id="sas:SAS1019"/>
<dbReference type="HOGENOM" id="CLU_007308_7_0_9"/>
<dbReference type="GO" id="GO:0005737">
    <property type="term" value="C:cytoplasm"/>
    <property type="evidence" value="ECO:0007669"/>
    <property type="project" value="UniProtKB-SubCell"/>
</dbReference>
<dbReference type="GO" id="GO:0016301">
    <property type="term" value="F:kinase activity"/>
    <property type="evidence" value="ECO:0007669"/>
    <property type="project" value="UniProtKB-KW"/>
</dbReference>
<dbReference type="GO" id="GO:0046872">
    <property type="term" value="F:metal ion binding"/>
    <property type="evidence" value="ECO:0007669"/>
    <property type="project" value="UniProtKB-KW"/>
</dbReference>
<dbReference type="GO" id="GO:0008965">
    <property type="term" value="F:phosphoenolpyruvate-protein phosphotransferase activity"/>
    <property type="evidence" value="ECO:0007669"/>
    <property type="project" value="UniProtKB-EC"/>
</dbReference>
<dbReference type="GO" id="GO:0009401">
    <property type="term" value="P:phosphoenolpyruvate-dependent sugar phosphotransferase system"/>
    <property type="evidence" value="ECO:0007669"/>
    <property type="project" value="UniProtKB-KW"/>
</dbReference>
<dbReference type="FunFam" id="1.10.274.10:FF:000001">
    <property type="entry name" value="Phosphoenolpyruvate-protein phosphotransferase"/>
    <property type="match status" value="1"/>
</dbReference>
<dbReference type="FunFam" id="3.20.20.60:FF:000007">
    <property type="entry name" value="Phosphoenolpyruvate-protein phosphotransferase"/>
    <property type="match status" value="1"/>
</dbReference>
<dbReference type="Gene3D" id="3.20.20.60">
    <property type="entry name" value="Phosphoenolpyruvate-binding domains"/>
    <property type="match status" value="1"/>
</dbReference>
<dbReference type="Gene3D" id="3.50.30.10">
    <property type="entry name" value="Phosphohistidine domain"/>
    <property type="match status" value="1"/>
</dbReference>
<dbReference type="Gene3D" id="1.10.274.10">
    <property type="entry name" value="PtsI, HPr-binding domain"/>
    <property type="match status" value="1"/>
</dbReference>
<dbReference type="InterPro" id="IPR008279">
    <property type="entry name" value="PEP-util_enz_mobile_dom"/>
</dbReference>
<dbReference type="InterPro" id="IPR050499">
    <property type="entry name" value="PEP-utilizing_PTS_enzyme"/>
</dbReference>
<dbReference type="InterPro" id="IPR018274">
    <property type="entry name" value="PEP_util_AS"/>
</dbReference>
<dbReference type="InterPro" id="IPR000121">
    <property type="entry name" value="PEP_util_C"/>
</dbReference>
<dbReference type="InterPro" id="IPR023151">
    <property type="entry name" value="PEP_util_CS"/>
</dbReference>
<dbReference type="InterPro" id="IPR036637">
    <property type="entry name" value="Phosphohistidine_dom_sf"/>
</dbReference>
<dbReference type="InterPro" id="IPR024692">
    <property type="entry name" value="PTS_EI"/>
</dbReference>
<dbReference type="InterPro" id="IPR006318">
    <property type="entry name" value="PTS_EI-like"/>
</dbReference>
<dbReference type="InterPro" id="IPR008731">
    <property type="entry name" value="PTS_EIN"/>
</dbReference>
<dbReference type="InterPro" id="IPR036618">
    <property type="entry name" value="PtsI_HPr-bd_sf"/>
</dbReference>
<dbReference type="InterPro" id="IPR015813">
    <property type="entry name" value="Pyrv/PenolPyrv_kinase-like_dom"/>
</dbReference>
<dbReference type="InterPro" id="IPR040442">
    <property type="entry name" value="Pyrv_kinase-like_dom_sf"/>
</dbReference>
<dbReference type="NCBIfam" id="TIGR01417">
    <property type="entry name" value="PTS_I_fam"/>
    <property type="match status" value="1"/>
</dbReference>
<dbReference type="PANTHER" id="PTHR46244">
    <property type="entry name" value="PHOSPHOENOLPYRUVATE-PROTEIN PHOSPHOTRANSFERASE"/>
    <property type="match status" value="1"/>
</dbReference>
<dbReference type="PANTHER" id="PTHR46244:SF3">
    <property type="entry name" value="PHOSPHOENOLPYRUVATE-PROTEIN PHOSPHOTRANSFERASE"/>
    <property type="match status" value="1"/>
</dbReference>
<dbReference type="Pfam" id="PF05524">
    <property type="entry name" value="PEP-utilisers_N"/>
    <property type="match status" value="1"/>
</dbReference>
<dbReference type="Pfam" id="PF00391">
    <property type="entry name" value="PEP-utilizers"/>
    <property type="match status" value="1"/>
</dbReference>
<dbReference type="Pfam" id="PF02896">
    <property type="entry name" value="PEP-utilizers_C"/>
    <property type="match status" value="1"/>
</dbReference>
<dbReference type="PIRSF" id="PIRSF000732">
    <property type="entry name" value="PTS_enzyme_I"/>
    <property type="match status" value="1"/>
</dbReference>
<dbReference type="PRINTS" id="PR01736">
    <property type="entry name" value="PHPHTRNFRASE"/>
</dbReference>
<dbReference type="SUPFAM" id="SSF47831">
    <property type="entry name" value="Enzyme I of the PEP:sugar phosphotransferase system HPr-binding (sub)domain"/>
    <property type="match status" value="1"/>
</dbReference>
<dbReference type="SUPFAM" id="SSF51621">
    <property type="entry name" value="Phosphoenolpyruvate/pyruvate domain"/>
    <property type="match status" value="1"/>
</dbReference>
<dbReference type="SUPFAM" id="SSF52009">
    <property type="entry name" value="Phosphohistidine domain"/>
    <property type="match status" value="1"/>
</dbReference>
<dbReference type="PROSITE" id="PS00742">
    <property type="entry name" value="PEP_ENZYMES_2"/>
    <property type="match status" value="1"/>
</dbReference>
<dbReference type="PROSITE" id="PS00370">
    <property type="entry name" value="PEP_ENZYMES_PHOS_SITE"/>
    <property type="match status" value="1"/>
</dbReference>
<comment type="function">
    <text evidence="1">General (non sugar-specific) component of the phosphoenolpyruvate-dependent sugar phosphotransferase system (sugar PTS). This major carbohydrate active-transport system catalyzes the phosphorylation of incoming sugar substrates concomitantly with their translocation across the cell membrane. Enzyme I transfers the phosphoryl group from phosphoenolpyruvate (PEP) to the phosphoryl carrier protein (HPr).</text>
</comment>
<comment type="catalytic activity">
    <reaction evidence="1">
        <text>L-histidyl-[protein] + phosphoenolpyruvate = N(pros)-phospho-L-histidyl-[protein] + pyruvate</text>
        <dbReference type="Rhea" id="RHEA:23880"/>
        <dbReference type="Rhea" id="RHEA-COMP:9745"/>
        <dbReference type="Rhea" id="RHEA-COMP:9746"/>
        <dbReference type="ChEBI" id="CHEBI:15361"/>
        <dbReference type="ChEBI" id="CHEBI:29979"/>
        <dbReference type="ChEBI" id="CHEBI:58702"/>
        <dbReference type="ChEBI" id="CHEBI:64837"/>
        <dbReference type="EC" id="2.7.3.9"/>
    </reaction>
</comment>
<comment type="cofactor">
    <cofactor evidence="1">
        <name>Mg(2+)</name>
        <dbReference type="ChEBI" id="CHEBI:18420"/>
    </cofactor>
</comment>
<comment type="subunit">
    <text evidence="1">Homodimer.</text>
</comment>
<comment type="subcellular location">
    <subcellularLocation>
        <location evidence="3">Cytoplasm</location>
    </subcellularLocation>
</comment>
<comment type="domain">
    <text evidence="1">The N-terminal domain contains the HPr binding site, the central domain the pyrophosphate/phosphate carrier histidine, and the C-terminal domain the pyruvate binding site.</text>
</comment>
<comment type="miscellaneous">
    <text evidence="1">The reaction takes place in three steps, mediated by a phosphocarrier histidine residue located on the surface of the central domain. The two first partial reactions are catalyzed at an active site located on the N-terminal domain, and the third partial reaction is catalyzed at an active site located on the C-terminal domain. For catalytic turnover, the central domain swivels from the concave surface of the N-terminal domain to that of the C-terminal domain.</text>
</comment>
<comment type="similarity">
    <text evidence="3">Belongs to the PEP-utilizing enzyme family.</text>
</comment>
<accession>Q6GAD0</accession>
<sequence length="572" mass="63277">MSKLIKGIAASDGVAIAKAYLLVEPDLTFDKNEKVTDVEGEVAKFNSAIEASKVELTKIRNNAEVQLGADKAAIFDAHLLVLDDPELIQPIQDKIKNENANAATALTDVTTQFVTIFESMDNEYMKERAADIRDVSKRVLSHILGVELPNPSMIDESVVIVGNDLTPSDTAQLNKEFVQGFATNIGGRTSHSAIMSRSLEIPAIVGTKSITQEVKQGDMIIVDGLNGDVIVNPTEDELIAYQDKRERYFADKKELQKLRDADTVTVDGVHAELAANIGTPNDLPGVIENGAQGIGLYRTEFLYMGRDQMPTEEEQFEAYKEVLEAMDGKRVVVRTLDIGGDKELSYLNLPEEMNPFLGYRAIRLCLAQQDIFRPQLRALLRASVYGKLNIMFPMVATINEFREAKAILLEEKENLKNEGHDISDDIELGIMVEIPATAALADVFAKEVDFFSIGTNDLIQYTLAADRMSERVSYLYQPYNPSILRLVKQVIEASHKEGKWTGMCGEMAGDETAIPLLLGLGLDEFSMSATSILKARRQINGLSKNEMTELANRAVDCATQEEVIELVNNYVK</sequence>
<gene>
    <name type="ordered locus">SAS1019</name>
</gene>
<protein>
    <recommendedName>
        <fullName evidence="1">Phosphoenolpyruvate-protein phosphotransferase</fullName>
        <ecNumber evidence="1">2.7.3.9</ecNumber>
    </recommendedName>
    <alternativeName>
        <fullName evidence="1">Phosphotransferase system, enzyme I</fullName>
    </alternativeName>
</protein>
<evidence type="ECO:0000250" key="1">
    <source>
        <dbReference type="UniProtKB" id="P08839"/>
    </source>
</evidence>
<evidence type="ECO:0000250" key="2">
    <source>
        <dbReference type="UniProtKB" id="P23533"/>
    </source>
</evidence>
<evidence type="ECO:0000305" key="3"/>
<reference key="1">
    <citation type="journal article" date="2004" name="Proc. Natl. Acad. Sci. U.S.A.">
        <title>Complete genomes of two clinical Staphylococcus aureus strains: evidence for the rapid evolution of virulence and drug resistance.</title>
        <authorList>
            <person name="Holden M.T.G."/>
            <person name="Feil E.J."/>
            <person name="Lindsay J.A."/>
            <person name="Peacock S.J."/>
            <person name="Day N.P.J."/>
            <person name="Enright M.C."/>
            <person name="Foster T.J."/>
            <person name="Moore C.E."/>
            <person name="Hurst L."/>
            <person name="Atkin R."/>
            <person name="Barron A."/>
            <person name="Bason N."/>
            <person name="Bentley S.D."/>
            <person name="Chillingworth C."/>
            <person name="Chillingworth T."/>
            <person name="Churcher C."/>
            <person name="Clark L."/>
            <person name="Corton C."/>
            <person name="Cronin A."/>
            <person name="Doggett J."/>
            <person name="Dowd L."/>
            <person name="Feltwell T."/>
            <person name="Hance Z."/>
            <person name="Harris B."/>
            <person name="Hauser H."/>
            <person name="Holroyd S."/>
            <person name="Jagels K."/>
            <person name="James K.D."/>
            <person name="Lennard N."/>
            <person name="Line A."/>
            <person name="Mayes R."/>
            <person name="Moule S."/>
            <person name="Mungall K."/>
            <person name="Ormond D."/>
            <person name="Quail M.A."/>
            <person name="Rabbinowitsch E."/>
            <person name="Rutherford K.M."/>
            <person name="Sanders M."/>
            <person name="Sharp S."/>
            <person name="Simmonds M."/>
            <person name="Stevens K."/>
            <person name="Whitehead S."/>
            <person name="Barrell B.G."/>
            <person name="Spratt B.G."/>
            <person name="Parkhill J."/>
        </authorList>
    </citation>
    <scope>NUCLEOTIDE SEQUENCE [LARGE SCALE GENOMIC DNA]</scope>
    <source>
        <strain>MSSA476</strain>
    </source>
</reference>
<organism>
    <name type="scientific">Staphylococcus aureus (strain MSSA476)</name>
    <dbReference type="NCBI Taxonomy" id="282459"/>
    <lineage>
        <taxon>Bacteria</taxon>
        <taxon>Bacillati</taxon>
        <taxon>Bacillota</taxon>
        <taxon>Bacilli</taxon>
        <taxon>Bacillales</taxon>
        <taxon>Staphylococcaceae</taxon>
        <taxon>Staphylococcus</taxon>
    </lineage>
</organism>